<sequence>MDTIVTPSDHRAEGEAVSTASPRDYFDLMKPRVMTLVVFTAFAGLIAAPVDADPFLAFMSILCLAVGAGAAGALNMAYDADIDATMQRTRKRPIPRGVVSVSNAYGFGVVASILSVLLMALASNYLAAGLLAFSIFFYAVIYTMILKRSTPQNIVIGGAAGAFPPMIGWVAATGEISLDAVILFMIIFLWTPPHSWALALYKSGDYAAANVPMMPVAKGAKSTRLQILLYSIVLVIFAGAPVLTGLGGAVYGATSLGGGALFLLLAWRIFRSRAGEAGSAEEGALYAVRAGDKAARDLFAYSIGYLTVLFAALIVEHAFGAYVAIPGVSP</sequence>
<accession>Q0AMG9</accession>
<feature type="chain" id="PRO_0000327077" description="Protoheme IX farnesyltransferase">
    <location>
        <begin position="1"/>
        <end position="330"/>
    </location>
</feature>
<feature type="transmembrane region" description="Helical" evidence="1">
    <location>
        <begin position="33"/>
        <end position="53"/>
    </location>
</feature>
<feature type="transmembrane region" description="Helical" evidence="1">
    <location>
        <begin position="54"/>
        <end position="74"/>
    </location>
</feature>
<feature type="transmembrane region" description="Helical" evidence="1">
    <location>
        <begin position="101"/>
        <end position="121"/>
    </location>
</feature>
<feature type="transmembrane region" description="Helical" evidence="1">
    <location>
        <begin position="126"/>
        <end position="146"/>
    </location>
</feature>
<feature type="transmembrane region" description="Helical" evidence="1">
    <location>
        <begin position="154"/>
        <end position="174"/>
    </location>
</feature>
<feature type="transmembrane region" description="Helical" evidence="1">
    <location>
        <begin position="180"/>
        <end position="200"/>
    </location>
</feature>
<feature type="transmembrane region" description="Helical" evidence="1">
    <location>
        <begin position="227"/>
        <end position="247"/>
    </location>
</feature>
<feature type="transmembrane region" description="Helical" evidence="1">
    <location>
        <begin position="250"/>
        <end position="270"/>
    </location>
</feature>
<feature type="transmembrane region" description="Helical" evidence="1">
    <location>
        <begin position="308"/>
        <end position="328"/>
    </location>
</feature>
<protein>
    <recommendedName>
        <fullName evidence="1">Protoheme IX farnesyltransferase</fullName>
        <ecNumber evidence="1">2.5.1.141</ecNumber>
    </recommendedName>
    <alternativeName>
        <fullName evidence="1">Heme B farnesyltransferase</fullName>
    </alternativeName>
    <alternativeName>
        <fullName evidence="1">Heme O synthase</fullName>
    </alternativeName>
</protein>
<proteinExistence type="inferred from homology"/>
<keyword id="KW-0997">Cell inner membrane</keyword>
<keyword id="KW-1003">Cell membrane</keyword>
<keyword id="KW-0350">Heme biosynthesis</keyword>
<keyword id="KW-0472">Membrane</keyword>
<keyword id="KW-1185">Reference proteome</keyword>
<keyword id="KW-0808">Transferase</keyword>
<keyword id="KW-0812">Transmembrane</keyword>
<keyword id="KW-1133">Transmembrane helix</keyword>
<evidence type="ECO:0000255" key="1">
    <source>
        <dbReference type="HAMAP-Rule" id="MF_00154"/>
    </source>
</evidence>
<organism>
    <name type="scientific">Maricaulis maris (strain MCS10)</name>
    <name type="common">Caulobacter maris</name>
    <dbReference type="NCBI Taxonomy" id="394221"/>
    <lineage>
        <taxon>Bacteria</taxon>
        <taxon>Pseudomonadati</taxon>
        <taxon>Pseudomonadota</taxon>
        <taxon>Alphaproteobacteria</taxon>
        <taxon>Maricaulales</taxon>
        <taxon>Maricaulaceae</taxon>
        <taxon>Maricaulis</taxon>
    </lineage>
</organism>
<dbReference type="EC" id="2.5.1.141" evidence="1"/>
<dbReference type="EMBL" id="CP000449">
    <property type="protein sequence ID" value="ABI66524.1"/>
    <property type="molecule type" value="Genomic_DNA"/>
</dbReference>
<dbReference type="RefSeq" id="WP_011644169.1">
    <property type="nucleotide sequence ID" value="NC_008347.1"/>
</dbReference>
<dbReference type="SMR" id="Q0AMG9"/>
<dbReference type="STRING" id="394221.Mmar10_2232"/>
<dbReference type="KEGG" id="mmr:Mmar10_2232"/>
<dbReference type="eggNOG" id="COG0109">
    <property type="taxonomic scope" value="Bacteria"/>
</dbReference>
<dbReference type="HOGENOM" id="CLU_029631_0_2_5"/>
<dbReference type="OrthoDB" id="9814417at2"/>
<dbReference type="UniPathway" id="UPA00834">
    <property type="reaction ID" value="UER00712"/>
</dbReference>
<dbReference type="Proteomes" id="UP000001964">
    <property type="component" value="Chromosome"/>
</dbReference>
<dbReference type="GO" id="GO:0005886">
    <property type="term" value="C:plasma membrane"/>
    <property type="evidence" value="ECO:0007669"/>
    <property type="project" value="UniProtKB-SubCell"/>
</dbReference>
<dbReference type="GO" id="GO:0008495">
    <property type="term" value="F:protoheme IX farnesyltransferase activity"/>
    <property type="evidence" value="ECO:0007669"/>
    <property type="project" value="UniProtKB-UniRule"/>
</dbReference>
<dbReference type="GO" id="GO:0048034">
    <property type="term" value="P:heme O biosynthetic process"/>
    <property type="evidence" value="ECO:0007669"/>
    <property type="project" value="UniProtKB-UniRule"/>
</dbReference>
<dbReference type="CDD" id="cd13957">
    <property type="entry name" value="PT_UbiA_Cox10"/>
    <property type="match status" value="1"/>
</dbReference>
<dbReference type="Gene3D" id="1.10.357.140">
    <property type="entry name" value="UbiA prenyltransferase"/>
    <property type="match status" value="1"/>
</dbReference>
<dbReference type="HAMAP" id="MF_00154">
    <property type="entry name" value="CyoE_CtaB"/>
    <property type="match status" value="1"/>
</dbReference>
<dbReference type="InterPro" id="IPR006369">
    <property type="entry name" value="Protohaem_IX_farnesylTrfase"/>
</dbReference>
<dbReference type="InterPro" id="IPR000537">
    <property type="entry name" value="UbiA_prenyltransferase"/>
</dbReference>
<dbReference type="InterPro" id="IPR030470">
    <property type="entry name" value="UbiA_prenylTrfase_CS"/>
</dbReference>
<dbReference type="InterPro" id="IPR044878">
    <property type="entry name" value="UbiA_sf"/>
</dbReference>
<dbReference type="NCBIfam" id="TIGR01473">
    <property type="entry name" value="cyoE_ctaB"/>
    <property type="match status" value="1"/>
</dbReference>
<dbReference type="NCBIfam" id="NF003349">
    <property type="entry name" value="PRK04375.1-2"/>
    <property type="match status" value="1"/>
</dbReference>
<dbReference type="PANTHER" id="PTHR43448:SF7">
    <property type="entry name" value="4-HYDROXYBENZOATE SOLANESYLTRANSFERASE"/>
    <property type="match status" value="1"/>
</dbReference>
<dbReference type="PANTHER" id="PTHR43448">
    <property type="entry name" value="PROTOHEME IX FARNESYLTRANSFERASE, MITOCHONDRIAL"/>
    <property type="match status" value="1"/>
</dbReference>
<dbReference type="Pfam" id="PF01040">
    <property type="entry name" value="UbiA"/>
    <property type="match status" value="1"/>
</dbReference>
<dbReference type="PROSITE" id="PS00943">
    <property type="entry name" value="UBIA"/>
    <property type="match status" value="1"/>
</dbReference>
<name>COXX_MARMM</name>
<comment type="function">
    <text evidence="1">Converts heme B (protoheme IX) to heme O by substitution of the vinyl group on carbon 2 of heme B porphyrin ring with a hydroxyethyl farnesyl side group.</text>
</comment>
<comment type="catalytic activity">
    <reaction evidence="1">
        <text>heme b + (2E,6E)-farnesyl diphosphate + H2O = Fe(II)-heme o + diphosphate</text>
        <dbReference type="Rhea" id="RHEA:28070"/>
        <dbReference type="ChEBI" id="CHEBI:15377"/>
        <dbReference type="ChEBI" id="CHEBI:33019"/>
        <dbReference type="ChEBI" id="CHEBI:60344"/>
        <dbReference type="ChEBI" id="CHEBI:60530"/>
        <dbReference type="ChEBI" id="CHEBI:175763"/>
        <dbReference type="EC" id="2.5.1.141"/>
    </reaction>
</comment>
<comment type="pathway">
    <text evidence="1">Porphyrin-containing compound metabolism; heme O biosynthesis; heme O from protoheme: step 1/1.</text>
</comment>
<comment type="subunit">
    <text evidence="1">Interacts with CtaA.</text>
</comment>
<comment type="subcellular location">
    <subcellularLocation>
        <location evidence="1">Cell inner membrane</location>
        <topology evidence="1">Multi-pass membrane protein</topology>
    </subcellularLocation>
</comment>
<comment type="miscellaneous">
    <text evidence="1">Carbon 2 of the heme B porphyrin ring is defined according to the Fischer nomenclature.</text>
</comment>
<comment type="similarity">
    <text evidence="1">Belongs to the UbiA prenyltransferase family. Protoheme IX farnesyltransferase subfamily.</text>
</comment>
<gene>
    <name evidence="1" type="primary">ctaB</name>
    <name type="ordered locus">Mmar10_2232</name>
</gene>
<reference key="1">
    <citation type="submission" date="2006-08" db="EMBL/GenBank/DDBJ databases">
        <title>Complete sequence of Maricaulis maris MCS10.</title>
        <authorList>
            <consortium name="US DOE Joint Genome Institute"/>
            <person name="Copeland A."/>
            <person name="Lucas S."/>
            <person name="Lapidus A."/>
            <person name="Barry K."/>
            <person name="Detter J.C."/>
            <person name="Glavina del Rio T."/>
            <person name="Hammon N."/>
            <person name="Israni S."/>
            <person name="Dalin E."/>
            <person name="Tice H."/>
            <person name="Pitluck S."/>
            <person name="Saunders E."/>
            <person name="Brettin T."/>
            <person name="Bruce D."/>
            <person name="Han C."/>
            <person name="Tapia R."/>
            <person name="Gilna P."/>
            <person name="Schmutz J."/>
            <person name="Larimer F."/>
            <person name="Land M."/>
            <person name="Hauser L."/>
            <person name="Kyrpides N."/>
            <person name="Mikhailova N."/>
            <person name="Viollier P."/>
            <person name="Stephens C."/>
            <person name="Richardson P."/>
        </authorList>
    </citation>
    <scope>NUCLEOTIDE SEQUENCE [LARGE SCALE GENOMIC DNA]</scope>
    <source>
        <strain>MCS10</strain>
    </source>
</reference>